<accession>Q96P67</accession>
<accession>Q5VT13</accession>
<keyword id="KW-1003">Cell membrane</keyword>
<keyword id="KW-0297">G-protein coupled receptor</keyword>
<keyword id="KW-0325">Glycoprotein</keyword>
<keyword id="KW-0472">Membrane</keyword>
<keyword id="KW-1267">Proteomics identification</keyword>
<keyword id="KW-0675">Receptor</keyword>
<keyword id="KW-1185">Reference proteome</keyword>
<keyword id="KW-0807">Transducer</keyword>
<keyword id="KW-0812">Transmembrane</keyword>
<keyword id="KW-1133">Transmembrane helix</keyword>
<feature type="chain" id="PRO_0000069588" description="Probable G-protein coupled receptor 82">
    <location>
        <begin position="1"/>
        <end position="336"/>
    </location>
</feature>
<feature type="topological domain" description="Extracellular" evidence="1">
    <location>
        <begin position="1"/>
        <end position="11"/>
    </location>
</feature>
<feature type="transmembrane region" description="Helical; Name=1" evidence="1">
    <location>
        <begin position="12"/>
        <end position="32"/>
    </location>
</feature>
<feature type="topological domain" description="Cytoplasmic" evidence="1">
    <location>
        <begin position="33"/>
        <end position="55"/>
    </location>
</feature>
<feature type="transmembrane region" description="Helical; Name=2" evidence="1">
    <location>
        <begin position="56"/>
        <end position="76"/>
    </location>
</feature>
<feature type="topological domain" description="Extracellular" evidence="1">
    <location>
        <begin position="77"/>
        <end position="92"/>
    </location>
</feature>
<feature type="transmembrane region" description="Helical; Name=3" evidence="1">
    <location>
        <begin position="93"/>
        <end position="115"/>
    </location>
</feature>
<feature type="topological domain" description="Cytoplasmic" evidence="1">
    <location>
        <begin position="116"/>
        <end position="156"/>
    </location>
</feature>
<feature type="transmembrane region" description="Helical; Name=4" evidence="1">
    <location>
        <begin position="157"/>
        <end position="177"/>
    </location>
</feature>
<feature type="topological domain" description="Extracellular" evidence="1">
    <location>
        <begin position="178"/>
        <end position="197"/>
    </location>
</feature>
<feature type="transmembrane region" description="Helical; Name=5" evidence="1">
    <location>
        <begin position="198"/>
        <end position="218"/>
    </location>
</feature>
<feature type="topological domain" description="Cytoplasmic" evidence="1">
    <location>
        <begin position="219"/>
        <end position="251"/>
    </location>
</feature>
<feature type="transmembrane region" description="Helical; Name=6" evidence="1">
    <location>
        <begin position="252"/>
        <end position="272"/>
    </location>
</feature>
<feature type="topological domain" description="Extracellular" evidence="1">
    <location>
        <begin position="273"/>
        <end position="336"/>
    </location>
</feature>
<feature type="glycosylation site" description="N-linked (GlcNAc...) asparagine" evidence="1">
    <location>
        <position position="3"/>
    </location>
</feature>
<feature type="glycosylation site" description="N-linked (GlcNAc...) asparagine" evidence="1">
    <location>
        <position position="4"/>
    </location>
</feature>
<organism>
    <name type="scientific">Homo sapiens</name>
    <name type="common">Human</name>
    <dbReference type="NCBI Taxonomy" id="9606"/>
    <lineage>
        <taxon>Eukaryota</taxon>
        <taxon>Metazoa</taxon>
        <taxon>Chordata</taxon>
        <taxon>Craniata</taxon>
        <taxon>Vertebrata</taxon>
        <taxon>Euteleostomi</taxon>
        <taxon>Mammalia</taxon>
        <taxon>Eutheria</taxon>
        <taxon>Euarchontoglires</taxon>
        <taxon>Primates</taxon>
        <taxon>Haplorrhini</taxon>
        <taxon>Catarrhini</taxon>
        <taxon>Hominidae</taxon>
        <taxon>Homo</taxon>
    </lineage>
</organism>
<gene>
    <name type="primary">GPR82</name>
</gene>
<evidence type="ECO:0000255" key="1"/>
<evidence type="ECO:0000255" key="2">
    <source>
        <dbReference type="PROSITE-ProRule" id="PRU00521"/>
    </source>
</evidence>
<protein>
    <recommendedName>
        <fullName>Probable G-protein coupled receptor 82</fullName>
    </recommendedName>
</protein>
<dbReference type="EMBL" id="AF411111">
    <property type="protein sequence ID" value="AAL26482.1"/>
    <property type="molecule type" value="Genomic_DNA"/>
</dbReference>
<dbReference type="EMBL" id="AB065935">
    <property type="protein sequence ID" value="BAC06150.1"/>
    <property type="molecule type" value="Genomic_DNA"/>
</dbReference>
<dbReference type="EMBL" id="AJ319076">
    <property type="protein sequence ID" value="CAC87490.1"/>
    <property type="molecule type" value="mRNA"/>
</dbReference>
<dbReference type="EMBL" id="JQ308170">
    <property type="protein sequence ID" value="AFF59480.1"/>
    <property type="molecule type" value="Genomic_DNA"/>
</dbReference>
<dbReference type="EMBL" id="AB083595">
    <property type="protein sequence ID" value="BAB89308.1"/>
    <property type="molecule type" value="Genomic_DNA"/>
</dbReference>
<dbReference type="EMBL" id="AK313702">
    <property type="protein sequence ID" value="BAG36448.1"/>
    <property type="molecule type" value="mRNA"/>
</dbReference>
<dbReference type="EMBL" id="AK122626">
    <property type="protein sequence ID" value="BAG53628.1"/>
    <property type="molecule type" value="mRNA"/>
</dbReference>
<dbReference type="EMBL" id="AL627402">
    <property type="status" value="NOT_ANNOTATED_CDS"/>
    <property type="molecule type" value="Genomic_DNA"/>
</dbReference>
<dbReference type="EMBL" id="CH471141">
    <property type="protein sequence ID" value="EAW59395.1"/>
    <property type="molecule type" value="Genomic_DNA"/>
</dbReference>
<dbReference type="EMBL" id="BC070180">
    <property type="protein sequence ID" value="AAH70180.1"/>
    <property type="molecule type" value="mRNA"/>
</dbReference>
<dbReference type="CCDS" id="CCDS14259.1"/>
<dbReference type="RefSeq" id="NP_543007.1">
    <property type="nucleotide sequence ID" value="NM_080817.5"/>
</dbReference>
<dbReference type="RefSeq" id="XP_016884903.1">
    <property type="nucleotide sequence ID" value="XM_017029414.1"/>
</dbReference>
<dbReference type="RefSeq" id="XP_047297947.1">
    <property type="nucleotide sequence ID" value="XM_047441991.1"/>
</dbReference>
<dbReference type="RefSeq" id="XP_047297948.1">
    <property type="nucleotide sequence ID" value="XM_047441992.1"/>
</dbReference>
<dbReference type="RefSeq" id="XP_054182810.1">
    <property type="nucleotide sequence ID" value="XM_054326835.1"/>
</dbReference>
<dbReference type="RefSeq" id="XP_054182811.1">
    <property type="nucleotide sequence ID" value="XM_054326836.1"/>
</dbReference>
<dbReference type="SMR" id="Q96P67"/>
<dbReference type="FunCoup" id="Q96P67">
    <property type="interactions" value="240"/>
</dbReference>
<dbReference type="STRING" id="9606.ENSP00000303549"/>
<dbReference type="ChEMBL" id="CHEMBL4523907"/>
<dbReference type="GlyCosmos" id="Q96P67">
    <property type="glycosylation" value="2 sites, No reported glycans"/>
</dbReference>
<dbReference type="GlyGen" id="Q96P67">
    <property type="glycosylation" value="2 sites"/>
</dbReference>
<dbReference type="iPTMnet" id="Q96P67"/>
<dbReference type="PhosphoSitePlus" id="Q96P67"/>
<dbReference type="BioMuta" id="GPR82"/>
<dbReference type="DMDM" id="27734323"/>
<dbReference type="PaxDb" id="9606-ENSP00000303549"/>
<dbReference type="PeptideAtlas" id="Q96P67"/>
<dbReference type="Antibodypedia" id="10923">
    <property type="antibodies" value="141 antibodies from 25 providers"/>
</dbReference>
<dbReference type="DNASU" id="27197"/>
<dbReference type="Ensembl" id="ENST00000302548.5">
    <property type="protein sequence ID" value="ENSP00000303549.4"/>
    <property type="gene ID" value="ENSG00000171657.6"/>
</dbReference>
<dbReference type="GeneID" id="27197"/>
<dbReference type="KEGG" id="hsa:27197"/>
<dbReference type="MANE-Select" id="ENST00000302548.5">
    <property type="protein sequence ID" value="ENSP00000303549.4"/>
    <property type="RefSeq nucleotide sequence ID" value="NM_080817.5"/>
    <property type="RefSeq protein sequence ID" value="NP_543007.1"/>
</dbReference>
<dbReference type="UCSC" id="uc004dft.3">
    <property type="organism name" value="human"/>
</dbReference>
<dbReference type="AGR" id="HGNC:4533"/>
<dbReference type="CTD" id="27197"/>
<dbReference type="DisGeNET" id="27197"/>
<dbReference type="GeneCards" id="GPR82"/>
<dbReference type="HGNC" id="HGNC:4533">
    <property type="gene designation" value="GPR82"/>
</dbReference>
<dbReference type="HPA" id="ENSG00000171657">
    <property type="expression patterns" value="Group enriched (intestine, lymphoid tissue)"/>
</dbReference>
<dbReference type="MIM" id="300748">
    <property type="type" value="gene"/>
</dbReference>
<dbReference type="neXtProt" id="NX_Q96P67"/>
<dbReference type="OpenTargets" id="ENSG00000171657"/>
<dbReference type="PharmGKB" id="PA28926"/>
<dbReference type="VEuPathDB" id="HostDB:ENSG00000171657"/>
<dbReference type="eggNOG" id="ENOG502R3JZ">
    <property type="taxonomic scope" value="Eukaryota"/>
</dbReference>
<dbReference type="GeneTree" id="ENSGT00990000203527"/>
<dbReference type="HOGENOM" id="CLU_060761_0_0_1"/>
<dbReference type="InParanoid" id="Q96P67"/>
<dbReference type="OMA" id="QKNTCIG"/>
<dbReference type="OrthoDB" id="9946711at2759"/>
<dbReference type="PAN-GO" id="Q96P67">
    <property type="GO annotations" value="0 GO annotations based on evolutionary models"/>
</dbReference>
<dbReference type="PhylomeDB" id="Q96P67"/>
<dbReference type="TreeFam" id="TF337127"/>
<dbReference type="PathwayCommons" id="Q96P67"/>
<dbReference type="BioGRID-ORCS" id="27197">
    <property type="hits" value="8 hits in 762 CRISPR screens"/>
</dbReference>
<dbReference type="GeneWiki" id="GPR82"/>
<dbReference type="GenomeRNAi" id="27197"/>
<dbReference type="Pharos" id="Q96P67">
    <property type="development level" value="Tdark"/>
</dbReference>
<dbReference type="PRO" id="PR:Q96P67"/>
<dbReference type="Proteomes" id="UP000005640">
    <property type="component" value="Chromosome X"/>
</dbReference>
<dbReference type="RNAct" id="Q96P67">
    <property type="molecule type" value="protein"/>
</dbReference>
<dbReference type="Bgee" id="ENSG00000171657">
    <property type="expression patterns" value="Expressed in epithelium of nasopharynx and 106 other cell types or tissues"/>
</dbReference>
<dbReference type="GO" id="GO:0005886">
    <property type="term" value="C:plasma membrane"/>
    <property type="evidence" value="ECO:0007669"/>
    <property type="project" value="UniProtKB-SubCell"/>
</dbReference>
<dbReference type="GO" id="GO:0004930">
    <property type="term" value="F:G protein-coupled receptor activity"/>
    <property type="evidence" value="ECO:0007669"/>
    <property type="project" value="UniProtKB-KW"/>
</dbReference>
<dbReference type="GO" id="GO:0060612">
    <property type="term" value="P:adipose tissue development"/>
    <property type="evidence" value="ECO:0007669"/>
    <property type="project" value="Ensembl"/>
</dbReference>
<dbReference type="GO" id="GO:0097009">
    <property type="term" value="P:energy homeostasis"/>
    <property type="evidence" value="ECO:0007669"/>
    <property type="project" value="Ensembl"/>
</dbReference>
<dbReference type="GO" id="GO:0032094">
    <property type="term" value="P:response to food"/>
    <property type="evidence" value="ECO:0007669"/>
    <property type="project" value="Ensembl"/>
</dbReference>
<dbReference type="GO" id="GO:0009749">
    <property type="term" value="P:response to glucose"/>
    <property type="evidence" value="ECO:0007669"/>
    <property type="project" value="Ensembl"/>
</dbReference>
<dbReference type="GO" id="GO:0032868">
    <property type="term" value="P:response to insulin"/>
    <property type="evidence" value="ECO:0007669"/>
    <property type="project" value="Ensembl"/>
</dbReference>
<dbReference type="GO" id="GO:0006641">
    <property type="term" value="P:triglyceride metabolic process"/>
    <property type="evidence" value="ECO:0007669"/>
    <property type="project" value="Ensembl"/>
</dbReference>
<dbReference type="CDD" id="cd14996">
    <property type="entry name" value="7tmA_GPR82"/>
    <property type="match status" value="1"/>
</dbReference>
<dbReference type="Gene3D" id="1.20.1070.10">
    <property type="entry name" value="Rhodopsin 7-helix transmembrane proteins"/>
    <property type="match status" value="1"/>
</dbReference>
<dbReference type="InterPro" id="IPR000276">
    <property type="entry name" value="GPCR_Rhodpsn"/>
</dbReference>
<dbReference type="InterPro" id="IPR017452">
    <property type="entry name" value="GPCR_Rhodpsn_7TM"/>
</dbReference>
<dbReference type="InterPro" id="IPR042804">
    <property type="entry name" value="GPR82"/>
</dbReference>
<dbReference type="PANTHER" id="PTHR47392">
    <property type="entry name" value="G-PROTEIN COUPLED RECEPTOR 82-RELATED"/>
    <property type="match status" value="1"/>
</dbReference>
<dbReference type="PANTHER" id="PTHR47392:SF1">
    <property type="entry name" value="G-PROTEIN COUPLED RECEPTOR 82-RELATED"/>
    <property type="match status" value="1"/>
</dbReference>
<dbReference type="Pfam" id="PF00001">
    <property type="entry name" value="7tm_1"/>
    <property type="match status" value="1"/>
</dbReference>
<dbReference type="PRINTS" id="PR00237">
    <property type="entry name" value="GPCRRHODOPSN"/>
</dbReference>
<dbReference type="SUPFAM" id="SSF81321">
    <property type="entry name" value="Family A G protein-coupled receptor-like"/>
    <property type="match status" value="1"/>
</dbReference>
<dbReference type="PROSITE" id="PS50262">
    <property type="entry name" value="G_PROTEIN_RECEP_F1_2"/>
    <property type="match status" value="1"/>
</dbReference>
<name>GPR82_HUMAN</name>
<comment type="function">
    <text>Orphan receptor.</text>
</comment>
<comment type="subcellular location">
    <subcellularLocation>
        <location>Cell membrane</location>
        <topology>Multi-pass membrane protein</topology>
    </subcellularLocation>
</comment>
<comment type="similarity">
    <text evidence="2">Belongs to the G-protein coupled receptor 1 family.</text>
</comment>
<sequence length="336" mass="38409">MNNNTTCIQPSMISSMALPIIYILLCIVGVFGNTLSQWIFLTKIGKKTSTHIYLSHLVTANLLVCSAMPFMSIYFLKGFQWEYQSAQCRVVNFLGTLSMHASMFVSLLILSWIAISRYATLMQKDSSQETTSCYEKIFYGHLLKKFRQPNFARKLCIYIWGVVLGIIIPVTVYYSVIEATEGEESLCYNRQMELGAMISQIAGLIGTTFIGFSFLVVLTSYYSFVSHLRKIRTCTSIMEKDLTYSSVKRHLLVIQILLIVCFLPYSIFKPIFYVLHQRDNCQQLNYLIETKNILTCLASARSSTDPIIFLLLDKTFKKTLYNLFTKSNSAHMQSYG</sequence>
<reference key="1">
    <citation type="journal article" date="2001" name="Gene">
        <title>Discovery and mapping of ten novel G protein-coupled receptor genes.</title>
        <authorList>
            <person name="Lee D.K."/>
            <person name="Nguyen T."/>
            <person name="Lynch K.R."/>
            <person name="Cheng R."/>
            <person name="Vanti W.B."/>
            <person name="Arkhitko O."/>
            <person name="Lewis T."/>
            <person name="Evans J.F."/>
            <person name="George S.R."/>
            <person name="O'Dowd B.F."/>
        </authorList>
    </citation>
    <scope>NUCLEOTIDE SEQUENCE [GENOMIC DNA]</scope>
</reference>
<reference key="2">
    <citation type="submission" date="2003-08" db="EMBL/GenBank/DDBJ databases">
        <title>Identification and functional characterization of a novel G protein-coupled nucleotide-/nucleoside receptor.</title>
        <authorList>
            <person name="von Kugelgen I."/>
            <person name="Bonisch H."/>
            <person name="Bruss M."/>
        </authorList>
    </citation>
    <scope>NUCLEOTIDE SEQUENCE [MRNA]</scope>
    <source>
        <tissue>Placenta</tissue>
    </source>
</reference>
<reference key="3">
    <citation type="submission" date="2011-12" db="EMBL/GenBank/DDBJ databases">
        <title>Isolation of intronless coding regions from genomic DNA of 4 human genes.</title>
        <authorList>
            <person name="Kaighin V.A."/>
            <person name="Martin A.L."/>
            <person name="Aronstam R.S."/>
        </authorList>
    </citation>
    <scope>NUCLEOTIDE SEQUENCE [GENOMIC DNA]</scope>
</reference>
<reference key="4">
    <citation type="submission" date="2001-07" db="EMBL/GenBank/DDBJ databases">
        <title>Genome-wide discovery and analysis of human seven transmembrane helix receptor genes.</title>
        <authorList>
            <person name="Suwa M."/>
            <person name="Sato T."/>
            <person name="Okouchi I."/>
            <person name="Arita M."/>
            <person name="Futami K."/>
            <person name="Matsumoto S."/>
            <person name="Tsutsumi S."/>
            <person name="Aburatani H."/>
            <person name="Asai K."/>
            <person name="Akiyama Y."/>
        </authorList>
    </citation>
    <scope>NUCLEOTIDE SEQUENCE [GENOMIC DNA]</scope>
</reference>
<reference key="5">
    <citation type="journal article" date="2004" name="Nat. Genet.">
        <title>Complete sequencing and characterization of 21,243 full-length human cDNAs.</title>
        <authorList>
            <person name="Ota T."/>
            <person name="Suzuki Y."/>
            <person name="Nishikawa T."/>
            <person name="Otsuki T."/>
            <person name="Sugiyama T."/>
            <person name="Irie R."/>
            <person name="Wakamatsu A."/>
            <person name="Hayashi K."/>
            <person name="Sato H."/>
            <person name="Nagai K."/>
            <person name="Kimura K."/>
            <person name="Makita H."/>
            <person name="Sekine M."/>
            <person name="Obayashi M."/>
            <person name="Nishi T."/>
            <person name="Shibahara T."/>
            <person name="Tanaka T."/>
            <person name="Ishii S."/>
            <person name="Yamamoto J."/>
            <person name="Saito K."/>
            <person name="Kawai Y."/>
            <person name="Isono Y."/>
            <person name="Nakamura Y."/>
            <person name="Nagahari K."/>
            <person name="Murakami K."/>
            <person name="Yasuda T."/>
            <person name="Iwayanagi T."/>
            <person name="Wagatsuma M."/>
            <person name="Shiratori A."/>
            <person name="Sudo H."/>
            <person name="Hosoiri T."/>
            <person name="Kaku Y."/>
            <person name="Kodaira H."/>
            <person name="Kondo H."/>
            <person name="Sugawara M."/>
            <person name="Takahashi M."/>
            <person name="Kanda K."/>
            <person name="Yokoi T."/>
            <person name="Furuya T."/>
            <person name="Kikkawa E."/>
            <person name="Omura Y."/>
            <person name="Abe K."/>
            <person name="Kamihara K."/>
            <person name="Katsuta N."/>
            <person name="Sato K."/>
            <person name="Tanikawa M."/>
            <person name="Yamazaki M."/>
            <person name="Ninomiya K."/>
            <person name="Ishibashi T."/>
            <person name="Yamashita H."/>
            <person name="Murakawa K."/>
            <person name="Fujimori K."/>
            <person name="Tanai H."/>
            <person name="Kimata M."/>
            <person name="Watanabe M."/>
            <person name="Hiraoka S."/>
            <person name="Chiba Y."/>
            <person name="Ishida S."/>
            <person name="Ono Y."/>
            <person name="Takiguchi S."/>
            <person name="Watanabe S."/>
            <person name="Yosida M."/>
            <person name="Hotuta T."/>
            <person name="Kusano J."/>
            <person name="Kanehori K."/>
            <person name="Takahashi-Fujii A."/>
            <person name="Hara H."/>
            <person name="Tanase T.-O."/>
            <person name="Nomura Y."/>
            <person name="Togiya S."/>
            <person name="Komai F."/>
            <person name="Hara R."/>
            <person name="Takeuchi K."/>
            <person name="Arita M."/>
            <person name="Imose N."/>
            <person name="Musashino K."/>
            <person name="Yuuki H."/>
            <person name="Oshima A."/>
            <person name="Sasaki N."/>
            <person name="Aotsuka S."/>
            <person name="Yoshikawa Y."/>
            <person name="Matsunawa H."/>
            <person name="Ichihara T."/>
            <person name="Shiohata N."/>
            <person name="Sano S."/>
            <person name="Moriya S."/>
            <person name="Momiyama H."/>
            <person name="Satoh N."/>
            <person name="Takami S."/>
            <person name="Terashima Y."/>
            <person name="Suzuki O."/>
            <person name="Nakagawa S."/>
            <person name="Senoh A."/>
            <person name="Mizoguchi H."/>
            <person name="Goto Y."/>
            <person name="Shimizu F."/>
            <person name="Wakebe H."/>
            <person name="Hishigaki H."/>
            <person name="Watanabe T."/>
            <person name="Sugiyama A."/>
            <person name="Takemoto M."/>
            <person name="Kawakami B."/>
            <person name="Yamazaki M."/>
            <person name="Watanabe K."/>
            <person name="Kumagai A."/>
            <person name="Itakura S."/>
            <person name="Fukuzumi Y."/>
            <person name="Fujimori Y."/>
            <person name="Komiyama M."/>
            <person name="Tashiro H."/>
            <person name="Tanigami A."/>
            <person name="Fujiwara T."/>
            <person name="Ono T."/>
            <person name="Yamada K."/>
            <person name="Fujii Y."/>
            <person name="Ozaki K."/>
            <person name="Hirao M."/>
            <person name="Ohmori Y."/>
            <person name="Kawabata A."/>
            <person name="Hikiji T."/>
            <person name="Kobatake N."/>
            <person name="Inagaki H."/>
            <person name="Ikema Y."/>
            <person name="Okamoto S."/>
            <person name="Okitani R."/>
            <person name="Kawakami T."/>
            <person name="Noguchi S."/>
            <person name="Itoh T."/>
            <person name="Shigeta K."/>
            <person name="Senba T."/>
            <person name="Matsumura K."/>
            <person name="Nakajima Y."/>
            <person name="Mizuno T."/>
            <person name="Morinaga M."/>
            <person name="Sasaki M."/>
            <person name="Togashi T."/>
            <person name="Oyama M."/>
            <person name="Hata H."/>
            <person name="Watanabe M."/>
            <person name="Komatsu T."/>
            <person name="Mizushima-Sugano J."/>
            <person name="Satoh T."/>
            <person name="Shirai Y."/>
            <person name="Takahashi Y."/>
            <person name="Nakagawa K."/>
            <person name="Okumura K."/>
            <person name="Nagase T."/>
            <person name="Nomura N."/>
            <person name="Kikuchi H."/>
            <person name="Masuho Y."/>
            <person name="Yamashita R."/>
            <person name="Nakai K."/>
            <person name="Yada T."/>
            <person name="Nakamura Y."/>
            <person name="Ohara O."/>
            <person name="Isogai T."/>
            <person name="Sugano S."/>
        </authorList>
    </citation>
    <scope>NUCLEOTIDE SEQUENCE [LARGE SCALE MRNA]</scope>
</reference>
<reference key="6">
    <citation type="journal article" date="2005" name="Nature">
        <title>The DNA sequence of the human X chromosome.</title>
        <authorList>
            <person name="Ross M.T."/>
            <person name="Grafham D.V."/>
            <person name="Coffey A.J."/>
            <person name="Scherer S."/>
            <person name="McLay K."/>
            <person name="Muzny D."/>
            <person name="Platzer M."/>
            <person name="Howell G.R."/>
            <person name="Burrows C."/>
            <person name="Bird C.P."/>
            <person name="Frankish A."/>
            <person name="Lovell F.L."/>
            <person name="Howe K.L."/>
            <person name="Ashurst J.L."/>
            <person name="Fulton R.S."/>
            <person name="Sudbrak R."/>
            <person name="Wen G."/>
            <person name="Jones M.C."/>
            <person name="Hurles M.E."/>
            <person name="Andrews T.D."/>
            <person name="Scott C.E."/>
            <person name="Searle S."/>
            <person name="Ramser J."/>
            <person name="Whittaker A."/>
            <person name="Deadman R."/>
            <person name="Carter N.P."/>
            <person name="Hunt S.E."/>
            <person name="Chen R."/>
            <person name="Cree A."/>
            <person name="Gunaratne P."/>
            <person name="Havlak P."/>
            <person name="Hodgson A."/>
            <person name="Metzker M.L."/>
            <person name="Richards S."/>
            <person name="Scott G."/>
            <person name="Steffen D."/>
            <person name="Sodergren E."/>
            <person name="Wheeler D.A."/>
            <person name="Worley K.C."/>
            <person name="Ainscough R."/>
            <person name="Ambrose K.D."/>
            <person name="Ansari-Lari M.A."/>
            <person name="Aradhya S."/>
            <person name="Ashwell R.I."/>
            <person name="Babbage A.K."/>
            <person name="Bagguley C.L."/>
            <person name="Ballabio A."/>
            <person name="Banerjee R."/>
            <person name="Barker G.E."/>
            <person name="Barlow K.F."/>
            <person name="Barrett I.P."/>
            <person name="Bates K.N."/>
            <person name="Beare D.M."/>
            <person name="Beasley H."/>
            <person name="Beasley O."/>
            <person name="Beck A."/>
            <person name="Bethel G."/>
            <person name="Blechschmidt K."/>
            <person name="Brady N."/>
            <person name="Bray-Allen S."/>
            <person name="Bridgeman A.M."/>
            <person name="Brown A.J."/>
            <person name="Brown M.J."/>
            <person name="Bonnin D."/>
            <person name="Bruford E.A."/>
            <person name="Buhay C."/>
            <person name="Burch P."/>
            <person name="Burford D."/>
            <person name="Burgess J."/>
            <person name="Burrill W."/>
            <person name="Burton J."/>
            <person name="Bye J.M."/>
            <person name="Carder C."/>
            <person name="Carrel L."/>
            <person name="Chako J."/>
            <person name="Chapman J.C."/>
            <person name="Chavez D."/>
            <person name="Chen E."/>
            <person name="Chen G."/>
            <person name="Chen Y."/>
            <person name="Chen Z."/>
            <person name="Chinault C."/>
            <person name="Ciccodicola A."/>
            <person name="Clark S.Y."/>
            <person name="Clarke G."/>
            <person name="Clee C.M."/>
            <person name="Clegg S."/>
            <person name="Clerc-Blankenburg K."/>
            <person name="Clifford K."/>
            <person name="Cobley V."/>
            <person name="Cole C.G."/>
            <person name="Conquer J.S."/>
            <person name="Corby N."/>
            <person name="Connor R.E."/>
            <person name="David R."/>
            <person name="Davies J."/>
            <person name="Davis C."/>
            <person name="Davis J."/>
            <person name="Delgado O."/>
            <person name="Deshazo D."/>
            <person name="Dhami P."/>
            <person name="Ding Y."/>
            <person name="Dinh H."/>
            <person name="Dodsworth S."/>
            <person name="Draper H."/>
            <person name="Dugan-Rocha S."/>
            <person name="Dunham A."/>
            <person name="Dunn M."/>
            <person name="Durbin K.J."/>
            <person name="Dutta I."/>
            <person name="Eades T."/>
            <person name="Ellwood M."/>
            <person name="Emery-Cohen A."/>
            <person name="Errington H."/>
            <person name="Evans K.L."/>
            <person name="Faulkner L."/>
            <person name="Francis F."/>
            <person name="Frankland J."/>
            <person name="Fraser A.E."/>
            <person name="Galgoczy P."/>
            <person name="Gilbert J."/>
            <person name="Gill R."/>
            <person name="Gloeckner G."/>
            <person name="Gregory S.G."/>
            <person name="Gribble S."/>
            <person name="Griffiths C."/>
            <person name="Grocock R."/>
            <person name="Gu Y."/>
            <person name="Gwilliam R."/>
            <person name="Hamilton C."/>
            <person name="Hart E.A."/>
            <person name="Hawes A."/>
            <person name="Heath P.D."/>
            <person name="Heitmann K."/>
            <person name="Hennig S."/>
            <person name="Hernandez J."/>
            <person name="Hinzmann B."/>
            <person name="Ho S."/>
            <person name="Hoffs M."/>
            <person name="Howden P.J."/>
            <person name="Huckle E.J."/>
            <person name="Hume J."/>
            <person name="Hunt P.J."/>
            <person name="Hunt A.R."/>
            <person name="Isherwood J."/>
            <person name="Jacob L."/>
            <person name="Johnson D."/>
            <person name="Jones S."/>
            <person name="de Jong P.J."/>
            <person name="Joseph S.S."/>
            <person name="Keenan S."/>
            <person name="Kelly S."/>
            <person name="Kershaw J.K."/>
            <person name="Khan Z."/>
            <person name="Kioschis P."/>
            <person name="Klages S."/>
            <person name="Knights A.J."/>
            <person name="Kosiura A."/>
            <person name="Kovar-Smith C."/>
            <person name="Laird G.K."/>
            <person name="Langford C."/>
            <person name="Lawlor S."/>
            <person name="Leversha M."/>
            <person name="Lewis L."/>
            <person name="Liu W."/>
            <person name="Lloyd C."/>
            <person name="Lloyd D.M."/>
            <person name="Loulseged H."/>
            <person name="Loveland J.E."/>
            <person name="Lovell J.D."/>
            <person name="Lozado R."/>
            <person name="Lu J."/>
            <person name="Lyne R."/>
            <person name="Ma J."/>
            <person name="Maheshwari M."/>
            <person name="Matthews L.H."/>
            <person name="McDowall J."/>
            <person name="McLaren S."/>
            <person name="McMurray A."/>
            <person name="Meidl P."/>
            <person name="Meitinger T."/>
            <person name="Milne S."/>
            <person name="Miner G."/>
            <person name="Mistry S.L."/>
            <person name="Morgan M."/>
            <person name="Morris S."/>
            <person name="Mueller I."/>
            <person name="Mullikin J.C."/>
            <person name="Nguyen N."/>
            <person name="Nordsiek G."/>
            <person name="Nyakatura G."/>
            <person name="O'dell C.N."/>
            <person name="Okwuonu G."/>
            <person name="Palmer S."/>
            <person name="Pandian R."/>
            <person name="Parker D."/>
            <person name="Parrish J."/>
            <person name="Pasternak S."/>
            <person name="Patel D."/>
            <person name="Pearce A.V."/>
            <person name="Pearson D.M."/>
            <person name="Pelan S.E."/>
            <person name="Perez L."/>
            <person name="Porter K.M."/>
            <person name="Ramsey Y."/>
            <person name="Reichwald K."/>
            <person name="Rhodes S."/>
            <person name="Ridler K.A."/>
            <person name="Schlessinger D."/>
            <person name="Schueler M.G."/>
            <person name="Sehra H.K."/>
            <person name="Shaw-Smith C."/>
            <person name="Shen H."/>
            <person name="Sheridan E.M."/>
            <person name="Shownkeen R."/>
            <person name="Skuce C.D."/>
            <person name="Smith M.L."/>
            <person name="Sotheran E.C."/>
            <person name="Steingruber H.E."/>
            <person name="Steward C.A."/>
            <person name="Storey R."/>
            <person name="Swann R.M."/>
            <person name="Swarbreck D."/>
            <person name="Tabor P.E."/>
            <person name="Taudien S."/>
            <person name="Taylor T."/>
            <person name="Teague B."/>
            <person name="Thomas K."/>
            <person name="Thorpe A."/>
            <person name="Timms K."/>
            <person name="Tracey A."/>
            <person name="Trevanion S."/>
            <person name="Tromans A.C."/>
            <person name="d'Urso M."/>
            <person name="Verduzco D."/>
            <person name="Villasana D."/>
            <person name="Waldron L."/>
            <person name="Wall M."/>
            <person name="Wang Q."/>
            <person name="Warren J."/>
            <person name="Warry G.L."/>
            <person name="Wei X."/>
            <person name="West A."/>
            <person name="Whitehead S.L."/>
            <person name="Whiteley M.N."/>
            <person name="Wilkinson J.E."/>
            <person name="Willey D.L."/>
            <person name="Williams G."/>
            <person name="Williams L."/>
            <person name="Williamson A."/>
            <person name="Williamson H."/>
            <person name="Wilming L."/>
            <person name="Woodmansey R.L."/>
            <person name="Wray P.W."/>
            <person name="Yen J."/>
            <person name="Zhang J."/>
            <person name="Zhou J."/>
            <person name="Zoghbi H."/>
            <person name="Zorilla S."/>
            <person name="Buck D."/>
            <person name="Reinhardt R."/>
            <person name="Poustka A."/>
            <person name="Rosenthal A."/>
            <person name="Lehrach H."/>
            <person name="Meindl A."/>
            <person name="Minx P.J."/>
            <person name="Hillier L.W."/>
            <person name="Willard H.F."/>
            <person name="Wilson R.K."/>
            <person name="Waterston R.H."/>
            <person name="Rice C.M."/>
            <person name="Vaudin M."/>
            <person name="Coulson A."/>
            <person name="Nelson D.L."/>
            <person name="Weinstock G."/>
            <person name="Sulston J.E."/>
            <person name="Durbin R.M."/>
            <person name="Hubbard T."/>
            <person name="Gibbs R.A."/>
            <person name="Beck S."/>
            <person name="Rogers J."/>
            <person name="Bentley D.R."/>
        </authorList>
    </citation>
    <scope>NUCLEOTIDE SEQUENCE [LARGE SCALE GENOMIC DNA]</scope>
</reference>
<reference key="7">
    <citation type="submission" date="2005-09" db="EMBL/GenBank/DDBJ databases">
        <authorList>
            <person name="Mural R.J."/>
            <person name="Istrail S."/>
            <person name="Sutton G."/>
            <person name="Florea L."/>
            <person name="Halpern A.L."/>
            <person name="Mobarry C.M."/>
            <person name="Lippert R."/>
            <person name="Walenz B."/>
            <person name="Shatkay H."/>
            <person name="Dew I."/>
            <person name="Miller J.R."/>
            <person name="Flanigan M.J."/>
            <person name="Edwards N.J."/>
            <person name="Bolanos R."/>
            <person name="Fasulo D."/>
            <person name="Halldorsson B.V."/>
            <person name="Hannenhalli S."/>
            <person name="Turner R."/>
            <person name="Yooseph S."/>
            <person name="Lu F."/>
            <person name="Nusskern D.R."/>
            <person name="Shue B.C."/>
            <person name="Zheng X.H."/>
            <person name="Zhong F."/>
            <person name="Delcher A.L."/>
            <person name="Huson D.H."/>
            <person name="Kravitz S.A."/>
            <person name="Mouchard L."/>
            <person name="Reinert K."/>
            <person name="Remington K.A."/>
            <person name="Clark A.G."/>
            <person name="Waterman M.S."/>
            <person name="Eichler E.E."/>
            <person name="Adams M.D."/>
            <person name="Hunkapiller M.W."/>
            <person name="Myers E.W."/>
            <person name="Venter J.C."/>
        </authorList>
    </citation>
    <scope>NUCLEOTIDE SEQUENCE [LARGE SCALE GENOMIC DNA]</scope>
</reference>
<reference key="8">
    <citation type="journal article" date="2002" name="FEBS Lett.">
        <title>Identification of G protein-coupled receptor genes from the human genome sequence.</title>
        <authorList>
            <person name="Takeda S."/>
            <person name="Kadowaki S."/>
            <person name="Haga T."/>
            <person name="Takaesu H."/>
            <person name="Mitaku S."/>
        </authorList>
    </citation>
    <scope>NUCLEOTIDE SEQUENCE [LARGE SCALE GENOMIC DNA]</scope>
</reference>
<reference key="9">
    <citation type="journal article" date="2004" name="Genome Res.">
        <title>The status, quality, and expansion of the NIH full-length cDNA project: the Mammalian Gene Collection (MGC).</title>
        <authorList>
            <consortium name="The MGC Project Team"/>
        </authorList>
    </citation>
    <scope>NUCLEOTIDE SEQUENCE [LARGE SCALE MRNA]</scope>
    <source>
        <tissue>Thyroid</tissue>
    </source>
</reference>
<proteinExistence type="evidence at protein level"/>